<gene>
    <name evidence="1" type="primary">orn</name>
    <name type="ordered locus">Neut_2290</name>
</gene>
<name>ORN_NITEC</name>
<keyword id="KW-0963">Cytoplasm</keyword>
<keyword id="KW-0269">Exonuclease</keyword>
<keyword id="KW-0378">Hydrolase</keyword>
<keyword id="KW-0540">Nuclease</keyword>
<dbReference type="EC" id="3.1.15.-" evidence="1"/>
<dbReference type="EMBL" id="CP000450">
    <property type="protein sequence ID" value="ABI60507.1"/>
    <property type="molecule type" value="Genomic_DNA"/>
</dbReference>
<dbReference type="RefSeq" id="WP_011635283.1">
    <property type="nucleotide sequence ID" value="NC_008344.1"/>
</dbReference>
<dbReference type="SMR" id="Q0ADS5"/>
<dbReference type="STRING" id="335283.Neut_2290"/>
<dbReference type="KEGG" id="net:Neut_2290"/>
<dbReference type="eggNOG" id="COG1949">
    <property type="taxonomic scope" value="Bacteria"/>
</dbReference>
<dbReference type="HOGENOM" id="CLU_064761_2_0_4"/>
<dbReference type="OrthoDB" id="9801329at2"/>
<dbReference type="Proteomes" id="UP000001966">
    <property type="component" value="Chromosome"/>
</dbReference>
<dbReference type="GO" id="GO:0005737">
    <property type="term" value="C:cytoplasm"/>
    <property type="evidence" value="ECO:0007669"/>
    <property type="project" value="UniProtKB-SubCell"/>
</dbReference>
<dbReference type="GO" id="GO:0000175">
    <property type="term" value="F:3'-5'-RNA exonuclease activity"/>
    <property type="evidence" value="ECO:0007669"/>
    <property type="project" value="InterPro"/>
</dbReference>
<dbReference type="GO" id="GO:0003676">
    <property type="term" value="F:nucleic acid binding"/>
    <property type="evidence" value="ECO:0007669"/>
    <property type="project" value="InterPro"/>
</dbReference>
<dbReference type="GO" id="GO:0006259">
    <property type="term" value="P:DNA metabolic process"/>
    <property type="evidence" value="ECO:0007669"/>
    <property type="project" value="UniProtKB-ARBA"/>
</dbReference>
<dbReference type="CDD" id="cd06135">
    <property type="entry name" value="Orn"/>
    <property type="match status" value="1"/>
</dbReference>
<dbReference type="FunFam" id="3.30.420.10:FF:000003">
    <property type="entry name" value="Oligoribonuclease"/>
    <property type="match status" value="1"/>
</dbReference>
<dbReference type="Gene3D" id="3.30.420.10">
    <property type="entry name" value="Ribonuclease H-like superfamily/Ribonuclease H"/>
    <property type="match status" value="1"/>
</dbReference>
<dbReference type="HAMAP" id="MF_00045">
    <property type="entry name" value="Oligoribonuclease"/>
    <property type="match status" value="1"/>
</dbReference>
<dbReference type="InterPro" id="IPR013520">
    <property type="entry name" value="Exonuclease_RNaseT/DNA_pol3"/>
</dbReference>
<dbReference type="InterPro" id="IPR022894">
    <property type="entry name" value="Oligoribonuclease"/>
</dbReference>
<dbReference type="InterPro" id="IPR012337">
    <property type="entry name" value="RNaseH-like_sf"/>
</dbReference>
<dbReference type="InterPro" id="IPR036397">
    <property type="entry name" value="RNaseH_sf"/>
</dbReference>
<dbReference type="NCBIfam" id="NF003765">
    <property type="entry name" value="PRK05359.1"/>
    <property type="match status" value="1"/>
</dbReference>
<dbReference type="PANTHER" id="PTHR11046">
    <property type="entry name" value="OLIGORIBONUCLEASE, MITOCHONDRIAL"/>
    <property type="match status" value="1"/>
</dbReference>
<dbReference type="PANTHER" id="PTHR11046:SF0">
    <property type="entry name" value="OLIGORIBONUCLEASE, MITOCHONDRIAL"/>
    <property type="match status" value="1"/>
</dbReference>
<dbReference type="Pfam" id="PF00929">
    <property type="entry name" value="RNase_T"/>
    <property type="match status" value="1"/>
</dbReference>
<dbReference type="SMART" id="SM00479">
    <property type="entry name" value="EXOIII"/>
    <property type="match status" value="1"/>
</dbReference>
<dbReference type="SUPFAM" id="SSF53098">
    <property type="entry name" value="Ribonuclease H-like"/>
    <property type="match status" value="1"/>
</dbReference>
<proteinExistence type="inferred from homology"/>
<evidence type="ECO:0000255" key="1">
    <source>
        <dbReference type="HAMAP-Rule" id="MF_00045"/>
    </source>
</evidence>
<accession>Q0ADS5</accession>
<reference key="1">
    <citation type="journal article" date="2007" name="Environ. Microbiol.">
        <title>Whole-genome analysis of the ammonia-oxidizing bacterium, Nitrosomonas eutropha C91: implications for niche adaptation.</title>
        <authorList>
            <person name="Stein L.Y."/>
            <person name="Arp D.J."/>
            <person name="Berube P.M."/>
            <person name="Chain P.S."/>
            <person name="Hauser L."/>
            <person name="Jetten M.S."/>
            <person name="Klotz M.G."/>
            <person name="Larimer F.W."/>
            <person name="Norton J.M."/>
            <person name="Op den Camp H.J.M."/>
            <person name="Shin M."/>
            <person name="Wei X."/>
        </authorList>
    </citation>
    <scope>NUCLEOTIDE SEQUENCE [LARGE SCALE GENOMIC DNA]</scope>
    <source>
        <strain>DSM 101675 / C91 / Nm57</strain>
    </source>
</reference>
<organism>
    <name type="scientific">Nitrosomonas eutropha (strain DSM 101675 / C91 / Nm57)</name>
    <dbReference type="NCBI Taxonomy" id="335283"/>
    <lineage>
        <taxon>Bacteria</taxon>
        <taxon>Pseudomonadati</taxon>
        <taxon>Pseudomonadota</taxon>
        <taxon>Betaproteobacteria</taxon>
        <taxon>Nitrosomonadales</taxon>
        <taxon>Nitrosomonadaceae</taxon>
        <taxon>Nitrosomonas</taxon>
    </lineage>
</organism>
<feature type="chain" id="PRO_1000004268" description="Oligoribonuclease">
    <location>
        <begin position="1"/>
        <end position="181"/>
    </location>
</feature>
<feature type="domain" description="Exonuclease" evidence="1">
    <location>
        <begin position="8"/>
        <end position="171"/>
    </location>
</feature>
<feature type="active site" evidence="1">
    <location>
        <position position="129"/>
    </location>
</feature>
<comment type="function">
    <text evidence="1">3'-to-5' exoribonuclease specific for small oligoribonucleotides.</text>
</comment>
<comment type="subcellular location">
    <subcellularLocation>
        <location evidence="1">Cytoplasm</location>
    </subcellularLocation>
</comment>
<comment type="similarity">
    <text evidence="1">Belongs to the oligoribonuclease family.</text>
</comment>
<protein>
    <recommendedName>
        <fullName evidence="1">Oligoribonuclease</fullName>
        <ecNumber evidence="1">3.1.15.-</ecNumber>
    </recommendedName>
</protein>
<sequence length="181" mass="20366">MAQDSNNLIWIDMEMTGLNPNTDCIIEIALVVTDAQLNTVAEAPVLVISQPDSVLNGMDKWNQSTHGKSGLIDKVKASTLSEAEAEARMLAFLAPYVPADISPMCGNSICQDRRFLARCMPQLEAYFHYRNLDVSTLKELAKRWKPEVAQGFNKQGKHEALADIYDSIEELKHYRQHLFNI</sequence>